<comment type="function">
    <text evidence="1 2 3">Cytoplasmic adapter regulating receptors of the signaling lymphocytic activation molecule (SLAM) family such as SLAMF1, CD244, LY9, CD84, SLAMF6 and SLAMF7. In SLAM signaling seems to cooperate with SH2D1B/EAT-2. Initially it has been proposed that association with SLAMF1 prevents SLAMF1 binding to inhibitory effectors including INPP5D/SHIP1 and PTPN11/SHP-2. However, by simultaneous interactions, recruits FYN which subsequently phosphorylates and activates SLAMF1. Positively regulates CD244/2B4- and CD84-mediated natural killer (NK) cell functions. Can also promote CD48-, SLAMF6 -, LY9-, and SLAMF7-mediated NK cell activation. In the context of NK cell-mediated cytotoxicity enhances conjugate formation with target cells (By similarity). May also regulate the activity of the neurotrophin receptors NTRK1, NTRK2 and NTRK3 (By similarity).</text>
</comment>
<comment type="subunit">
    <text evidence="1 2">Interacts with CD84, CD244, LY9, SLAMF1 and FYN. Interacts with NTRK1, NTRK2 and NTRK3 (By similarity).</text>
</comment>
<comment type="subcellular location">
    <subcellularLocation>
        <location evidence="2">Cytoplasm</location>
    </subcellularLocation>
</comment>
<reference key="1">
    <citation type="journal article" date="2001" name="J. Biol. Chem.">
        <title>Characterization of SH2D1A missense mutations identified in X-linked lymphoproliferative disease patients.</title>
        <authorList>
            <person name="Morra M."/>
            <person name="Simarro-Grande M."/>
            <person name="Martin M."/>
            <person name="Chen A.S.-I."/>
            <person name="Lanyi A."/>
            <person name="Silander O."/>
            <person name="Calpe S."/>
            <person name="Davis J."/>
            <person name="Pawson T."/>
            <person name="Eck M.J."/>
            <person name="Sumegi J."/>
            <person name="Engel P."/>
            <person name="Li S.-C."/>
            <person name="Terhorst C."/>
        </authorList>
    </citation>
    <scope>NUCLEOTIDE SEQUENCE [MRNA]</scope>
    <source>
        <tissue>Peripheral blood lymphocyte</tissue>
    </source>
</reference>
<accession>Q9BG88</accession>
<name>SH21A_SAGOE</name>
<protein>
    <recommendedName>
        <fullName>SH2 domain-containing protein 1A</fullName>
    </recommendedName>
</protein>
<feature type="chain" id="PRO_0000356886" description="SH2 domain-containing protein 1A">
    <location>
        <begin position="1"/>
        <end position="127"/>
    </location>
</feature>
<feature type="domain" description="SH2" evidence="4">
    <location>
        <begin position="6"/>
        <end position="102"/>
    </location>
</feature>
<feature type="region of interest" description="Interaction with FYN SH3 domain" evidence="3">
    <location>
        <begin position="67"/>
        <end position="92"/>
    </location>
</feature>
<feature type="region of interest" description="Disordered" evidence="5">
    <location>
        <begin position="104"/>
        <end position="127"/>
    </location>
</feature>
<feature type="compositionally biased region" description="Basic and acidic residues" evidence="5">
    <location>
        <begin position="116"/>
        <end position="127"/>
    </location>
</feature>
<feature type="modified residue" description="N6-acetyllysine" evidence="2">
    <location>
        <position position="89"/>
    </location>
</feature>
<evidence type="ECO:0000250" key="1">
    <source>
        <dbReference type="UniProtKB" id="B2RZ59"/>
    </source>
</evidence>
<evidence type="ECO:0000250" key="2">
    <source>
        <dbReference type="UniProtKB" id="O60880"/>
    </source>
</evidence>
<evidence type="ECO:0000250" key="3">
    <source>
        <dbReference type="UniProtKB" id="O88890"/>
    </source>
</evidence>
<evidence type="ECO:0000255" key="4">
    <source>
        <dbReference type="PROSITE-ProRule" id="PRU00191"/>
    </source>
</evidence>
<evidence type="ECO:0000256" key="5">
    <source>
        <dbReference type="SAM" id="MobiDB-lite"/>
    </source>
</evidence>
<sequence>MDAVAVYHGKISRETGEKLLLATGLDGSYLLRDSESVPGVYCLCVLYHGYIYTYRVSQTETGSWSAETAPGVHKRYFRKIKNLISAFQKPDQGIVIPLQYPVEKSSPRSTQGTTGIREDPDVCLKAP</sequence>
<gene>
    <name type="primary">SH2D1A</name>
</gene>
<proteinExistence type="evidence at transcript level"/>
<keyword id="KW-0007">Acetylation</keyword>
<keyword id="KW-1064">Adaptive immunity</keyword>
<keyword id="KW-0963">Cytoplasm</keyword>
<keyword id="KW-0391">Immunity</keyword>
<keyword id="KW-0399">Innate immunity</keyword>
<keyword id="KW-0727">SH2 domain</keyword>
<dbReference type="EMBL" id="AF322913">
    <property type="protein sequence ID" value="AAK11579.1"/>
    <property type="molecule type" value="mRNA"/>
</dbReference>
<dbReference type="SMR" id="Q9BG88"/>
<dbReference type="GO" id="GO:0005737">
    <property type="term" value="C:cytoplasm"/>
    <property type="evidence" value="ECO:0007669"/>
    <property type="project" value="UniProtKB-SubCell"/>
</dbReference>
<dbReference type="GO" id="GO:0002250">
    <property type="term" value="P:adaptive immune response"/>
    <property type="evidence" value="ECO:0007669"/>
    <property type="project" value="UniProtKB-KW"/>
</dbReference>
<dbReference type="GO" id="GO:0007267">
    <property type="term" value="P:cell-cell signaling"/>
    <property type="evidence" value="ECO:0007669"/>
    <property type="project" value="InterPro"/>
</dbReference>
<dbReference type="GO" id="GO:0006968">
    <property type="term" value="P:cellular defense response"/>
    <property type="evidence" value="ECO:0007669"/>
    <property type="project" value="InterPro"/>
</dbReference>
<dbReference type="GO" id="GO:0045087">
    <property type="term" value="P:innate immune response"/>
    <property type="evidence" value="ECO:0007669"/>
    <property type="project" value="UniProtKB-KW"/>
</dbReference>
<dbReference type="GO" id="GO:0050776">
    <property type="term" value="P:regulation of immune response"/>
    <property type="evidence" value="ECO:0007669"/>
    <property type="project" value="TreeGrafter"/>
</dbReference>
<dbReference type="GO" id="GO:0009966">
    <property type="term" value="P:regulation of signal transduction"/>
    <property type="evidence" value="ECO:0007669"/>
    <property type="project" value="TreeGrafter"/>
</dbReference>
<dbReference type="CDD" id="cd10400">
    <property type="entry name" value="SH2_SAP1a"/>
    <property type="match status" value="1"/>
</dbReference>
<dbReference type="FunFam" id="3.30.505.10:FF:000062">
    <property type="entry name" value="SH2 domain-containing protein 1A"/>
    <property type="match status" value="1"/>
</dbReference>
<dbReference type="Gene3D" id="3.30.505.10">
    <property type="entry name" value="SH2 domain"/>
    <property type="match status" value="1"/>
</dbReference>
<dbReference type="InterPro" id="IPR000980">
    <property type="entry name" value="SH2"/>
</dbReference>
<dbReference type="InterPro" id="IPR036860">
    <property type="entry name" value="SH2_dom_sf"/>
</dbReference>
<dbReference type="InterPro" id="IPR017289">
    <property type="entry name" value="SH2_prot_1A"/>
</dbReference>
<dbReference type="InterPro" id="IPR035876">
    <property type="entry name" value="SH2D1A_SH2"/>
</dbReference>
<dbReference type="PANTHER" id="PTHR46051:SF1">
    <property type="entry name" value="INOSITOL POLYPHOSPHATE-RELATED PHOSPHATASE DOMAIN-CONTAINING PROTEIN"/>
    <property type="match status" value="1"/>
</dbReference>
<dbReference type="PANTHER" id="PTHR46051">
    <property type="entry name" value="SH2 DOMAIN-CONTAINING PROTEIN"/>
    <property type="match status" value="1"/>
</dbReference>
<dbReference type="Pfam" id="PF00017">
    <property type="entry name" value="SH2"/>
    <property type="match status" value="1"/>
</dbReference>
<dbReference type="PIRSF" id="PIRSF037828">
    <property type="entry name" value="SH2_p1A"/>
    <property type="match status" value="1"/>
</dbReference>
<dbReference type="PRINTS" id="PR00401">
    <property type="entry name" value="SH2DOMAIN"/>
</dbReference>
<dbReference type="SMART" id="SM00252">
    <property type="entry name" value="SH2"/>
    <property type="match status" value="1"/>
</dbReference>
<dbReference type="SUPFAM" id="SSF55550">
    <property type="entry name" value="SH2 domain"/>
    <property type="match status" value="1"/>
</dbReference>
<dbReference type="PROSITE" id="PS50001">
    <property type="entry name" value="SH2"/>
    <property type="match status" value="1"/>
</dbReference>
<organism>
    <name type="scientific">Saguinus oedipus</name>
    <name type="common">Cotton-top tamarin</name>
    <dbReference type="NCBI Taxonomy" id="9490"/>
    <lineage>
        <taxon>Eukaryota</taxon>
        <taxon>Metazoa</taxon>
        <taxon>Chordata</taxon>
        <taxon>Craniata</taxon>
        <taxon>Vertebrata</taxon>
        <taxon>Euteleostomi</taxon>
        <taxon>Mammalia</taxon>
        <taxon>Eutheria</taxon>
        <taxon>Euarchontoglires</taxon>
        <taxon>Primates</taxon>
        <taxon>Haplorrhini</taxon>
        <taxon>Platyrrhini</taxon>
        <taxon>Cebidae</taxon>
        <taxon>Callitrichinae</taxon>
        <taxon>Saguinus</taxon>
    </lineage>
</organism>